<keyword id="KW-0066">ATP synthesis</keyword>
<keyword id="KW-0997">Cell inner membrane</keyword>
<keyword id="KW-1003">Cell membrane</keyword>
<keyword id="KW-0139">CF(1)</keyword>
<keyword id="KW-0375">Hydrogen ion transport</keyword>
<keyword id="KW-0406">Ion transport</keyword>
<keyword id="KW-0472">Membrane</keyword>
<keyword id="KW-0813">Transport</keyword>
<organism>
    <name type="scientific">Stenotrophomonas maltophilia (strain R551-3)</name>
    <dbReference type="NCBI Taxonomy" id="391008"/>
    <lineage>
        <taxon>Bacteria</taxon>
        <taxon>Pseudomonadati</taxon>
        <taxon>Pseudomonadota</taxon>
        <taxon>Gammaproteobacteria</taxon>
        <taxon>Lysobacterales</taxon>
        <taxon>Lysobacteraceae</taxon>
        <taxon>Stenotrophomonas</taxon>
        <taxon>Stenotrophomonas maltophilia group</taxon>
    </lineage>
</organism>
<comment type="function">
    <text evidence="1">Produces ATP from ADP in the presence of a proton gradient across the membrane. The gamma chain is believed to be important in regulating ATPase activity and the flow of protons through the CF(0) complex.</text>
</comment>
<comment type="subunit">
    <text evidence="1">F-type ATPases have 2 components, CF(1) - the catalytic core - and CF(0) - the membrane proton channel. CF(1) has five subunits: alpha(3), beta(3), gamma(1), delta(1), epsilon(1). CF(0) has three main subunits: a, b and c.</text>
</comment>
<comment type="subcellular location">
    <subcellularLocation>
        <location evidence="1">Cell inner membrane</location>
        <topology evidence="1">Peripheral membrane protein</topology>
    </subcellularLocation>
</comment>
<comment type="similarity">
    <text evidence="1">Belongs to the ATPase gamma chain family.</text>
</comment>
<name>ATPG_STRM5</name>
<proteinExistence type="inferred from homology"/>
<gene>
    <name evidence="1" type="primary">atpG</name>
    <name type="ordered locus">Smal_3512</name>
</gene>
<accession>B4SJS0</accession>
<sequence length="287" mass="31936">MASGREIKTKIKSVQNTRKVTRALEMVSASKIRKAQDRMKTSRPYAQAMKQVIGHLAQASTDYQHPFLVEREQVKRVGFIVISSDRGLAGGLNNNLFRKLLGEAKAWQDKGAEVDMVTIGQKASTFFRRVKVNMVGSVTHIGDVPKLESLIGVIKVMLDAFTEGKIDRVYLVYNRFINTMTQKASFDQLLPLPAAEKQVAHHDWDYLYEPDAATVLEHVMTRYIESLVYQALLENVASEHAARMVAMKSASDNANKLIGDLQLVYNKARQAAITQEISEIVGGAAAV</sequence>
<reference key="1">
    <citation type="submission" date="2008-06" db="EMBL/GenBank/DDBJ databases">
        <title>Complete sequence of Stenotrophomonas maltophilia R551-3.</title>
        <authorList>
            <consortium name="US DOE Joint Genome Institute"/>
            <person name="Lucas S."/>
            <person name="Copeland A."/>
            <person name="Lapidus A."/>
            <person name="Glavina del Rio T."/>
            <person name="Dalin E."/>
            <person name="Tice H."/>
            <person name="Pitluck S."/>
            <person name="Chain P."/>
            <person name="Malfatti S."/>
            <person name="Shin M."/>
            <person name="Vergez L."/>
            <person name="Lang D."/>
            <person name="Schmutz J."/>
            <person name="Larimer F."/>
            <person name="Land M."/>
            <person name="Hauser L."/>
            <person name="Kyrpides N."/>
            <person name="Mikhailova N."/>
            <person name="Taghavi S."/>
            <person name="Monchy S."/>
            <person name="Newman L."/>
            <person name="Vangronsveld J."/>
            <person name="van der Lelie D."/>
            <person name="Richardson P."/>
        </authorList>
    </citation>
    <scope>NUCLEOTIDE SEQUENCE [LARGE SCALE GENOMIC DNA]</scope>
    <source>
        <strain>R551-3</strain>
    </source>
</reference>
<feature type="chain" id="PRO_1000134211" description="ATP synthase gamma chain">
    <location>
        <begin position="1"/>
        <end position="287"/>
    </location>
</feature>
<protein>
    <recommendedName>
        <fullName evidence="1">ATP synthase gamma chain</fullName>
    </recommendedName>
    <alternativeName>
        <fullName evidence="1">ATP synthase F1 sector gamma subunit</fullName>
    </alternativeName>
    <alternativeName>
        <fullName evidence="1">F-ATPase gamma subunit</fullName>
    </alternativeName>
</protein>
<evidence type="ECO:0000255" key="1">
    <source>
        <dbReference type="HAMAP-Rule" id="MF_00815"/>
    </source>
</evidence>
<dbReference type="EMBL" id="CP001111">
    <property type="protein sequence ID" value="ACF53211.1"/>
    <property type="molecule type" value="Genomic_DNA"/>
</dbReference>
<dbReference type="RefSeq" id="WP_006394538.1">
    <property type="nucleotide sequence ID" value="NC_011071.1"/>
</dbReference>
<dbReference type="SMR" id="B4SJS0"/>
<dbReference type="STRING" id="391008.Smal_3512"/>
<dbReference type="KEGG" id="smt:Smal_3512"/>
<dbReference type="eggNOG" id="COG0224">
    <property type="taxonomic scope" value="Bacteria"/>
</dbReference>
<dbReference type="HOGENOM" id="CLU_050669_0_1_6"/>
<dbReference type="OrthoDB" id="9812769at2"/>
<dbReference type="Proteomes" id="UP000001867">
    <property type="component" value="Chromosome"/>
</dbReference>
<dbReference type="GO" id="GO:0005886">
    <property type="term" value="C:plasma membrane"/>
    <property type="evidence" value="ECO:0007669"/>
    <property type="project" value="UniProtKB-SubCell"/>
</dbReference>
<dbReference type="GO" id="GO:0045259">
    <property type="term" value="C:proton-transporting ATP synthase complex"/>
    <property type="evidence" value="ECO:0007669"/>
    <property type="project" value="UniProtKB-KW"/>
</dbReference>
<dbReference type="GO" id="GO:0005524">
    <property type="term" value="F:ATP binding"/>
    <property type="evidence" value="ECO:0007669"/>
    <property type="project" value="UniProtKB-UniRule"/>
</dbReference>
<dbReference type="GO" id="GO:0046933">
    <property type="term" value="F:proton-transporting ATP synthase activity, rotational mechanism"/>
    <property type="evidence" value="ECO:0007669"/>
    <property type="project" value="UniProtKB-UniRule"/>
</dbReference>
<dbReference type="GO" id="GO:0042777">
    <property type="term" value="P:proton motive force-driven plasma membrane ATP synthesis"/>
    <property type="evidence" value="ECO:0007669"/>
    <property type="project" value="UniProtKB-UniRule"/>
</dbReference>
<dbReference type="CDD" id="cd12151">
    <property type="entry name" value="F1-ATPase_gamma"/>
    <property type="match status" value="1"/>
</dbReference>
<dbReference type="FunFam" id="1.10.287.80:FF:000005">
    <property type="entry name" value="ATP synthase gamma chain"/>
    <property type="match status" value="1"/>
</dbReference>
<dbReference type="FunFam" id="3.40.1380.10:FF:000007">
    <property type="entry name" value="ATP synthase gamma chain"/>
    <property type="match status" value="1"/>
</dbReference>
<dbReference type="Gene3D" id="3.40.1380.10">
    <property type="match status" value="1"/>
</dbReference>
<dbReference type="Gene3D" id="1.10.287.80">
    <property type="entry name" value="ATP synthase, gamma subunit, helix hairpin domain"/>
    <property type="match status" value="1"/>
</dbReference>
<dbReference type="HAMAP" id="MF_00815">
    <property type="entry name" value="ATP_synth_gamma_bact"/>
    <property type="match status" value="1"/>
</dbReference>
<dbReference type="InterPro" id="IPR035968">
    <property type="entry name" value="ATP_synth_F1_ATPase_gsu"/>
</dbReference>
<dbReference type="InterPro" id="IPR000131">
    <property type="entry name" value="ATP_synth_F1_gsu"/>
</dbReference>
<dbReference type="InterPro" id="IPR023632">
    <property type="entry name" value="ATP_synth_F1_gsu_CS"/>
</dbReference>
<dbReference type="NCBIfam" id="TIGR01146">
    <property type="entry name" value="ATPsyn_F1gamma"/>
    <property type="match status" value="1"/>
</dbReference>
<dbReference type="NCBIfam" id="NF004144">
    <property type="entry name" value="PRK05621.1-1"/>
    <property type="match status" value="1"/>
</dbReference>
<dbReference type="PANTHER" id="PTHR11693">
    <property type="entry name" value="ATP SYNTHASE GAMMA CHAIN"/>
    <property type="match status" value="1"/>
</dbReference>
<dbReference type="PANTHER" id="PTHR11693:SF22">
    <property type="entry name" value="ATP SYNTHASE SUBUNIT GAMMA, MITOCHONDRIAL"/>
    <property type="match status" value="1"/>
</dbReference>
<dbReference type="Pfam" id="PF00231">
    <property type="entry name" value="ATP-synt"/>
    <property type="match status" value="1"/>
</dbReference>
<dbReference type="PRINTS" id="PR00126">
    <property type="entry name" value="ATPASEGAMMA"/>
</dbReference>
<dbReference type="SUPFAM" id="SSF52943">
    <property type="entry name" value="ATP synthase (F1-ATPase), gamma subunit"/>
    <property type="match status" value="1"/>
</dbReference>
<dbReference type="PROSITE" id="PS00153">
    <property type="entry name" value="ATPASE_GAMMA"/>
    <property type="match status" value="1"/>
</dbReference>